<protein>
    <recommendedName>
        <fullName>Sex-determining region Y protein</fullName>
    </recommendedName>
    <alternativeName>
        <fullName>Testis-determining factor</fullName>
    </alternativeName>
</protein>
<proteinExistence type="inferred from homology"/>
<accession>O55062</accession>
<name>SRY_APOFL</name>
<dbReference type="EMBL" id="AF047164">
    <property type="protein sequence ID" value="AAC96072.1"/>
    <property type="molecule type" value="Genomic_DNA"/>
</dbReference>
<dbReference type="SMR" id="O55062"/>
<dbReference type="GO" id="GO:0005737">
    <property type="term" value="C:cytoplasm"/>
    <property type="evidence" value="ECO:0007669"/>
    <property type="project" value="UniProtKB-SubCell"/>
</dbReference>
<dbReference type="GO" id="GO:0016607">
    <property type="term" value="C:nuclear speck"/>
    <property type="evidence" value="ECO:0007669"/>
    <property type="project" value="UniProtKB-SubCell"/>
</dbReference>
<dbReference type="GO" id="GO:0005634">
    <property type="term" value="C:nucleus"/>
    <property type="evidence" value="ECO:0000250"/>
    <property type="project" value="UniProtKB"/>
</dbReference>
<dbReference type="GO" id="GO:0005516">
    <property type="term" value="F:calmodulin binding"/>
    <property type="evidence" value="ECO:0007669"/>
    <property type="project" value="UniProtKB-KW"/>
</dbReference>
<dbReference type="GO" id="GO:0001228">
    <property type="term" value="F:DNA-binding transcription activator activity, RNA polymerase II-specific"/>
    <property type="evidence" value="ECO:0007669"/>
    <property type="project" value="TreeGrafter"/>
</dbReference>
<dbReference type="GO" id="GO:0000978">
    <property type="term" value="F:RNA polymerase II cis-regulatory region sequence-specific DNA binding"/>
    <property type="evidence" value="ECO:0007669"/>
    <property type="project" value="TreeGrafter"/>
</dbReference>
<dbReference type="GO" id="GO:0030154">
    <property type="term" value="P:cell differentiation"/>
    <property type="evidence" value="ECO:0007669"/>
    <property type="project" value="UniProtKB-KW"/>
</dbReference>
<dbReference type="GO" id="GO:0007548">
    <property type="term" value="P:sex differentiation"/>
    <property type="evidence" value="ECO:0007669"/>
    <property type="project" value="UniProtKB-KW"/>
</dbReference>
<dbReference type="FunFam" id="1.10.30.10:FF:000100">
    <property type="entry name" value="Sex-determining region Y protein"/>
    <property type="match status" value="1"/>
</dbReference>
<dbReference type="Gene3D" id="1.10.30.10">
    <property type="entry name" value="High mobility group box domain"/>
    <property type="match status" value="1"/>
</dbReference>
<dbReference type="InterPro" id="IPR009071">
    <property type="entry name" value="HMG_box_dom"/>
</dbReference>
<dbReference type="InterPro" id="IPR036910">
    <property type="entry name" value="HMG_box_dom_sf"/>
</dbReference>
<dbReference type="InterPro" id="IPR050140">
    <property type="entry name" value="SRY-related_HMG-box_TF-like"/>
</dbReference>
<dbReference type="PANTHER" id="PTHR10270:SF161">
    <property type="entry name" value="SEX-DETERMINING REGION Y PROTEIN"/>
    <property type="match status" value="1"/>
</dbReference>
<dbReference type="PANTHER" id="PTHR10270">
    <property type="entry name" value="SOX TRANSCRIPTION FACTOR"/>
    <property type="match status" value="1"/>
</dbReference>
<dbReference type="Pfam" id="PF00505">
    <property type="entry name" value="HMG_box"/>
    <property type="match status" value="1"/>
</dbReference>
<dbReference type="SMART" id="SM00398">
    <property type="entry name" value="HMG"/>
    <property type="match status" value="1"/>
</dbReference>
<dbReference type="SUPFAM" id="SSF47095">
    <property type="entry name" value="HMG-box"/>
    <property type="match status" value="1"/>
</dbReference>
<dbReference type="PROSITE" id="PS50118">
    <property type="entry name" value="HMG_BOX_2"/>
    <property type="match status" value="1"/>
</dbReference>
<evidence type="ECO:0000250" key="1">
    <source>
        <dbReference type="UniProtKB" id="P36394"/>
    </source>
</evidence>
<evidence type="ECO:0000250" key="2">
    <source>
        <dbReference type="UniProtKB" id="Q05066"/>
    </source>
</evidence>
<evidence type="ECO:0000255" key="3">
    <source>
        <dbReference type="PROSITE-ProRule" id="PRU00267"/>
    </source>
</evidence>
<evidence type="ECO:0000305" key="4"/>
<reference key="1">
    <citation type="journal article" date="1998" name="Mamm. Genome">
        <title>Male sex determination in the spiny rat Tokudaia osimensis (Rodentia: Muridae) is not Sry dependent.</title>
        <authorList>
            <person name="Soullier S."/>
            <person name="Hanni C."/>
            <person name="Catzeflis F."/>
            <person name="Berta P."/>
            <person name="Laudet V."/>
        </authorList>
    </citation>
    <scope>NUCLEOTIDE SEQUENCE [GENOMIC DNA]</scope>
</reference>
<keyword id="KW-0010">Activator</keyword>
<keyword id="KW-0112">Calmodulin-binding</keyword>
<keyword id="KW-0963">Cytoplasm</keyword>
<keyword id="KW-0221">Differentiation</keyword>
<keyword id="KW-0238">DNA-binding</keyword>
<keyword id="KW-0539">Nucleus</keyword>
<keyword id="KW-0726">Sexual differentiation</keyword>
<keyword id="KW-0804">Transcription</keyword>
<keyword id="KW-0805">Transcription regulation</keyword>
<sequence length="57" mass="6732">PMNAFMVWSCGERRKLAQQNPSMQNTQISKQLEYGWKSLTEAEKRTLFQEAQRLKTL</sequence>
<feature type="chain" id="PRO_0000048633" description="Sex-determining region Y protein">
    <location>
        <begin position="1" status="less than"/>
        <end position="57" status="greater than"/>
    </location>
</feature>
<feature type="DNA-binding region" description="HMG box" evidence="3">
    <location>
        <begin position="1" status="less than"/>
        <end position="57" status="greater than"/>
    </location>
</feature>
<feature type="non-terminal residue">
    <location>
        <position position="1"/>
    </location>
</feature>
<feature type="non-terminal residue">
    <location>
        <position position="57"/>
    </location>
</feature>
<organism>
    <name type="scientific">Apodemus flavicollis</name>
    <name type="common">Yellow-necked field mouse</name>
    <dbReference type="NCBI Taxonomy" id="54292"/>
    <lineage>
        <taxon>Eukaryota</taxon>
        <taxon>Metazoa</taxon>
        <taxon>Chordata</taxon>
        <taxon>Craniata</taxon>
        <taxon>Vertebrata</taxon>
        <taxon>Euteleostomi</taxon>
        <taxon>Mammalia</taxon>
        <taxon>Eutheria</taxon>
        <taxon>Euarchontoglires</taxon>
        <taxon>Glires</taxon>
        <taxon>Rodentia</taxon>
        <taxon>Myomorpha</taxon>
        <taxon>Muroidea</taxon>
        <taxon>Muridae</taxon>
        <taxon>Murinae</taxon>
        <taxon>Apodemus</taxon>
        <taxon>Sylvaemus group</taxon>
    </lineage>
</organism>
<gene>
    <name type="primary">SRY</name>
    <name type="synonym">TDF</name>
</gene>
<comment type="function">
    <text evidence="1 2">Transcriptional regulator that controls a genetic switch in male development. It is necessary and sufficient for initiating male sex determination by directing the development of supporting cell precursors (pre-Sertoli cells) as Sertoli rather than granulosa cells. Involved in different aspects of gene regulation including promoter activation or repression. Binds to the DNA consensus sequence 5'-[AT]AACAA[AT]-3'. SRY HMG box recognizes DNA by partial intercalation in the minor groove and promotes DNA bending. Also involved in pre-mRNA splicing (By similarity). In male adult brain involved in the maintenance of motor functions of dopaminergic neurons (By similarity).</text>
</comment>
<comment type="subunit">
    <text evidence="2">Interacts with CALM, EP300, HDAC3, KPNB1, ZNF208 isoform KRAB-O, PARP1, SLC9A3R2 and WT1. The interaction with EP300 modulates its DNA-binding activity. The interaction with KPNB1 is sensitive to dissociation by Ran in the GTP-bound form. Interaction with PARP1 impaired its DNA-binding activity.</text>
</comment>
<comment type="subcellular location">
    <subcellularLocation>
        <location evidence="2">Nucleus speckle</location>
    </subcellularLocation>
    <subcellularLocation>
        <location evidence="2">Cytoplasm</location>
    </subcellularLocation>
    <subcellularLocation>
        <location evidence="2">Nucleus</location>
    </subcellularLocation>
</comment>
<comment type="similarity">
    <text evidence="4">Belongs to the SRY family.</text>
</comment>
<comment type="online information" name="Protein Spotlight">
    <link uri="https://www.proteinspotlight.org/back_issues/080"/>
    <text>The tenuous nature of sex - Issue 80 of March 2007</text>
</comment>